<dbReference type="EMBL" id="CP000480">
    <property type="protein sequence ID" value="ABK73765.1"/>
    <property type="molecule type" value="Genomic_DNA"/>
</dbReference>
<dbReference type="EMBL" id="CP001663">
    <property type="protein sequence ID" value="AFP39059.1"/>
    <property type="molecule type" value="Genomic_DNA"/>
</dbReference>
<dbReference type="RefSeq" id="WP_003894036.1">
    <property type="nucleotide sequence ID" value="NZ_SIJM01000064.1"/>
</dbReference>
<dbReference type="RefSeq" id="YP_886991.1">
    <property type="nucleotide sequence ID" value="NC_008596.1"/>
</dbReference>
<dbReference type="PDB" id="5O5J">
    <property type="method" value="EM"/>
    <property type="resolution" value="3.45 A"/>
    <property type="chains" value="O=1-89"/>
</dbReference>
<dbReference type="PDB" id="5O61">
    <property type="method" value="EM"/>
    <property type="resolution" value="3.31 A"/>
    <property type="chains" value="BO=1-89"/>
</dbReference>
<dbReference type="PDB" id="5XYU">
    <property type="method" value="EM"/>
    <property type="resolution" value="3.45 A"/>
    <property type="chains" value="O=1-89"/>
</dbReference>
<dbReference type="PDB" id="5ZEB">
    <property type="method" value="EM"/>
    <property type="resolution" value="3.40 A"/>
    <property type="chains" value="o=1-89"/>
</dbReference>
<dbReference type="PDB" id="5ZEP">
    <property type="method" value="EM"/>
    <property type="resolution" value="3.40 A"/>
    <property type="chains" value="o=1-89"/>
</dbReference>
<dbReference type="PDB" id="5ZEU">
    <property type="method" value="EM"/>
    <property type="resolution" value="3.70 A"/>
    <property type="chains" value="o=1-89"/>
</dbReference>
<dbReference type="PDB" id="6DZI">
    <property type="method" value="EM"/>
    <property type="resolution" value="3.46 A"/>
    <property type="chains" value="x=2-89"/>
</dbReference>
<dbReference type="PDB" id="6DZK">
    <property type="method" value="EM"/>
    <property type="resolution" value="3.60 A"/>
    <property type="chains" value="O=2-89"/>
</dbReference>
<dbReference type="PDB" id="8FR8">
    <property type="method" value="EM"/>
    <property type="resolution" value="2.76 A"/>
    <property type="chains" value="p=2-89"/>
</dbReference>
<dbReference type="PDB" id="8V9J">
    <property type="method" value="EM"/>
    <property type="resolution" value="3.10 A"/>
    <property type="chains" value="o=1-89"/>
</dbReference>
<dbReference type="PDB" id="8V9K">
    <property type="method" value="EM"/>
    <property type="resolution" value="3.10 A"/>
    <property type="chains" value="o=1-89"/>
</dbReference>
<dbReference type="PDB" id="8V9L">
    <property type="method" value="EM"/>
    <property type="resolution" value="3.00 A"/>
    <property type="chains" value="o=1-89"/>
</dbReference>
<dbReference type="PDB" id="8VIO">
    <property type="method" value="EM"/>
    <property type="resolution" value="3.26 A"/>
    <property type="chains" value="v=1-89"/>
</dbReference>
<dbReference type="PDB" id="8WHX">
    <property type="method" value="EM"/>
    <property type="resolution" value="2.80 A"/>
    <property type="chains" value="p=1-89"/>
</dbReference>
<dbReference type="PDB" id="8WI7">
    <property type="method" value="EM"/>
    <property type="resolution" value="3.50 A"/>
    <property type="chains" value="p=1-89"/>
</dbReference>
<dbReference type="PDB" id="8WI9">
    <property type="method" value="EM"/>
    <property type="resolution" value="3.50 A"/>
    <property type="chains" value="p=1-89"/>
</dbReference>
<dbReference type="PDB" id="8WIB">
    <property type="method" value="EM"/>
    <property type="resolution" value="3.50 A"/>
    <property type="chains" value="p=1-89"/>
</dbReference>
<dbReference type="PDB" id="8WID">
    <property type="method" value="EM"/>
    <property type="resolution" value="3.50 A"/>
    <property type="chains" value="p=1-89"/>
</dbReference>
<dbReference type="PDB" id="8WIF">
    <property type="method" value="EM"/>
    <property type="resolution" value="2.90 A"/>
    <property type="chains" value="p=1-89"/>
</dbReference>
<dbReference type="PDBsum" id="5O5J"/>
<dbReference type="PDBsum" id="5O61"/>
<dbReference type="PDBsum" id="5XYU"/>
<dbReference type="PDBsum" id="5ZEB"/>
<dbReference type="PDBsum" id="5ZEP"/>
<dbReference type="PDBsum" id="5ZEU"/>
<dbReference type="PDBsum" id="6DZI"/>
<dbReference type="PDBsum" id="6DZK"/>
<dbReference type="PDBsum" id="8FR8"/>
<dbReference type="PDBsum" id="8V9J"/>
<dbReference type="PDBsum" id="8V9K"/>
<dbReference type="PDBsum" id="8V9L"/>
<dbReference type="PDBsum" id="8VIO"/>
<dbReference type="PDBsum" id="8WHX"/>
<dbReference type="PDBsum" id="8WI7"/>
<dbReference type="PDBsum" id="8WI9"/>
<dbReference type="PDBsum" id="8WIB"/>
<dbReference type="PDBsum" id="8WID"/>
<dbReference type="PDBsum" id="8WIF"/>
<dbReference type="EMDB" id="EMD-29397"/>
<dbReference type="EMDB" id="EMD-3748"/>
<dbReference type="EMDB" id="EMD-3751"/>
<dbReference type="EMDB" id="EMD-37551"/>
<dbReference type="EMDB" id="EMD-37559"/>
<dbReference type="EMDB" id="EMD-37561"/>
<dbReference type="EMDB" id="EMD-37562"/>
<dbReference type="EMDB" id="EMD-37564"/>
<dbReference type="EMDB" id="EMD-37565"/>
<dbReference type="EMDB" id="EMD-43074"/>
<dbReference type="EMDB" id="EMD-43075"/>
<dbReference type="EMDB" id="EMD-43076"/>
<dbReference type="EMDB" id="EMD-43267"/>
<dbReference type="EMDB" id="EMD-6790"/>
<dbReference type="EMDB" id="EMD-6920"/>
<dbReference type="EMDB" id="EMD-6921"/>
<dbReference type="EMDB" id="EMD-6923"/>
<dbReference type="EMDB" id="EMD-8932"/>
<dbReference type="EMDB" id="EMD-8934"/>
<dbReference type="SMR" id="A0QVQ3"/>
<dbReference type="IntAct" id="A0QVQ3">
    <property type="interactions" value="1"/>
</dbReference>
<dbReference type="STRING" id="246196.MSMEG_2654"/>
<dbReference type="PaxDb" id="246196-MSMEI_2591"/>
<dbReference type="GeneID" id="93457440"/>
<dbReference type="KEGG" id="msb:LJ00_13210"/>
<dbReference type="KEGG" id="msg:MSMEI_2591"/>
<dbReference type="KEGG" id="msm:MSMEG_2654"/>
<dbReference type="PATRIC" id="fig|246196.19.peg.2620"/>
<dbReference type="eggNOG" id="COG0184">
    <property type="taxonomic scope" value="Bacteria"/>
</dbReference>
<dbReference type="OrthoDB" id="9799262at2"/>
<dbReference type="Proteomes" id="UP000000757">
    <property type="component" value="Chromosome"/>
</dbReference>
<dbReference type="Proteomes" id="UP000006158">
    <property type="component" value="Chromosome"/>
</dbReference>
<dbReference type="GO" id="GO:0022627">
    <property type="term" value="C:cytosolic small ribosomal subunit"/>
    <property type="evidence" value="ECO:0007669"/>
    <property type="project" value="TreeGrafter"/>
</dbReference>
<dbReference type="GO" id="GO:0019843">
    <property type="term" value="F:rRNA binding"/>
    <property type="evidence" value="ECO:0007669"/>
    <property type="project" value="UniProtKB-UniRule"/>
</dbReference>
<dbReference type="GO" id="GO:0003735">
    <property type="term" value="F:structural constituent of ribosome"/>
    <property type="evidence" value="ECO:0007669"/>
    <property type="project" value="InterPro"/>
</dbReference>
<dbReference type="GO" id="GO:0006412">
    <property type="term" value="P:translation"/>
    <property type="evidence" value="ECO:0007669"/>
    <property type="project" value="UniProtKB-UniRule"/>
</dbReference>
<dbReference type="CDD" id="cd00353">
    <property type="entry name" value="Ribosomal_S15p_S13e"/>
    <property type="match status" value="1"/>
</dbReference>
<dbReference type="FunFam" id="1.10.287.10:FF:000002">
    <property type="entry name" value="30S ribosomal protein S15"/>
    <property type="match status" value="1"/>
</dbReference>
<dbReference type="Gene3D" id="6.10.250.3130">
    <property type="match status" value="1"/>
</dbReference>
<dbReference type="Gene3D" id="1.10.287.10">
    <property type="entry name" value="S15/NS1, RNA-binding"/>
    <property type="match status" value="1"/>
</dbReference>
<dbReference type="HAMAP" id="MF_01343_B">
    <property type="entry name" value="Ribosomal_uS15_B"/>
    <property type="match status" value="1"/>
</dbReference>
<dbReference type="InterPro" id="IPR000589">
    <property type="entry name" value="Ribosomal_uS15"/>
</dbReference>
<dbReference type="InterPro" id="IPR005290">
    <property type="entry name" value="Ribosomal_uS15_bac-type"/>
</dbReference>
<dbReference type="InterPro" id="IPR009068">
    <property type="entry name" value="uS15_NS1_RNA-bd_sf"/>
</dbReference>
<dbReference type="NCBIfam" id="TIGR00952">
    <property type="entry name" value="S15_bact"/>
    <property type="match status" value="1"/>
</dbReference>
<dbReference type="PANTHER" id="PTHR23321">
    <property type="entry name" value="RIBOSOMAL PROTEIN S15, BACTERIAL AND ORGANELLAR"/>
    <property type="match status" value="1"/>
</dbReference>
<dbReference type="PANTHER" id="PTHR23321:SF26">
    <property type="entry name" value="SMALL RIBOSOMAL SUBUNIT PROTEIN US15M"/>
    <property type="match status" value="1"/>
</dbReference>
<dbReference type="Pfam" id="PF00312">
    <property type="entry name" value="Ribosomal_S15"/>
    <property type="match status" value="1"/>
</dbReference>
<dbReference type="SMART" id="SM01387">
    <property type="entry name" value="Ribosomal_S15"/>
    <property type="match status" value="1"/>
</dbReference>
<dbReference type="SUPFAM" id="SSF47060">
    <property type="entry name" value="S15/NS1 RNA-binding domain"/>
    <property type="match status" value="1"/>
</dbReference>
<dbReference type="PROSITE" id="PS00362">
    <property type="entry name" value="RIBOSOMAL_S15"/>
    <property type="match status" value="1"/>
</dbReference>
<organism>
    <name type="scientific">Mycolicibacterium smegmatis (strain ATCC 700084 / mc(2)155)</name>
    <name type="common">Mycobacterium smegmatis</name>
    <dbReference type="NCBI Taxonomy" id="246196"/>
    <lineage>
        <taxon>Bacteria</taxon>
        <taxon>Bacillati</taxon>
        <taxon>Actinomycetota</taxon>
        <taxon>Actinomycetes</taxon>
        <taxon>Mycobacteriales</taxon>
        <taxon>Mycobacteriaceae</taxon>
        <taxon>Mycolicibacterium</taxon>
    </lineage>
</organism>
<protein>
    <recommendedName>
        <fullName evidence="1">Small ribosomal subunit protein uS15</fullName>
    </recommendedName>
    <alternativeName>
        <fullName evidence="3">30S ribosomal protein S15</fullName>
    </alternativeName>
</protein>
<proteinExistence type="evidence at protein level"/>
<feature type="initiator methionine" description="Removed" evidence="2">
    <location>
        <position position="1"/>
    </location>
</feature>
<feature type="chain" id="PRO_1000054819" description="Small ribosomal subunit protein uS15">
    <location>
        <begin position="2"/>
        <end position="89"/>
    </location>
</feature>
<feature type="helix" evidence="4">
    <location>
        <begin position="5"/>
        <end position="15"/>
    </location>
</feature>
<feature type="strand" evidence="4">
    <location>
        <begin position="17"/>
        <end position="20"/>
    </location>
</feature>
<feature type="helix" evidence="4">
    <location>
        <begin position="25"/>
        <end position="46"/>
    </location>
</feature>
<feature type="helix" evidence="4">
    <location>
        <begin position="50"/>
        <end position="73"/>
    </location>
</feature>
<feature type="helix" evidence="4">
    <location>
        <begin position="75"/>
        <end position="85"/>
    </location>
</feature>
<accession>A0QVQ3</accession>
<accession>I7G919</accession>
<keyword id="KW-0002">3D-structure</keyword>
<keyword id="KW-1185">Reference proteome</keyword>
<keyword id="KW-0687">Ribonucleoprotein</keyword>
<keyword id="KW-0689">Ribosomal protein</keyword>
<keyword id="KW-0694">RNA-binding</keyword>
<keyword id="KW-0699">rRNA-binding</keyword>
<name>RS15_MYCS2</name>
<gene>
    <name evidence="1" type="primary">rpsO</name>
    <name type="ordered locus">MSMEG_2654</name>
    <name type="ordered locus">MSMEI_2591</name>
</gene>
<comment type="function">
    <text evidence="1">One of the primary rRNA binding proteins, it binds directly to 16S rRNA where it helps nucleate assembly of the platform of the 30S subunit by binding and bridging several RNA helices of the 16S rRNA.</text>
</comment>
<comment type="function">
    <text evidence="1">Forms an intersubunit bridge (bridge B4) with the 23S rRNA of the 50S subunit in the ribosome.</text>
</comment>
<comment type="subunit">
    <text evidence="1">Part of the 30S ribosomal subunit. Forms a bridge to the 50S subunit in the 70S ribosome, contacting the 23S rRNA.</text>
</comment>
<comment type="similarity">
    <text evidence="1">Belongs to the universal ribosomal protein uS15 family.</text>
</comment>
<evidence type="ECO:0000255" key="1">
    <source>
        <dbReference type="HAMAP-Rule" id="MF_01343"/>
    </source>
</evidence>
<evidence type="ECO:0000269" key="2">
    <source>
    </source>
</evidence>
<evidence type="ECO:0000305" key="3"/>
<evidence type="ECO:0007829" key="4">
    <source>
        <dbReference type="PDB" id="5XYU"/>
    </source>
</evidence>
<reference key="1">
    <citation type="submission" date="2006-10" db="EMBL/GenBank/DDBJ databases">
        <authorList>
            <person name="Fleischmann R.D."/>
            <person name="Dodson R.J."/>
            <person name="Haft D.H."/>
            <person name="Merkel J.S."/>
            <person name="Nelson W.C."/>
            <person name="Fraser C.M."/>
        </authorList>
    </citation>
    <scope>NUCLEOTIDE SEQUENCE [LARGE SCALE GENOMIC DNA]</scope>
    <source>
        <strain>ATCC 700084 / mc(2)155</strain>
    </source>
</reference>
<reference key="2">
    <citation type="journal article" date="2007" name="Genome Biol.">
        <title>Interrupted coding sequences in Mycobacterium smegmatis: authentic mutations or sequencing errors?</title>
        <authorList>
            <person name="Deshayes C."/>
            <person name="Perrodou E."/>
            <person name="Gallien S."/>
            <person name="Euphrasie D."/>
            <person name="Schaeffer C."/>
            <person name="Van-Dorsselaer A."/>
            <person name="Poch O."/>
            <person name="Lecompte O."/>
            <person name="Reyrat J.-M."/>
        </authorList>
    </citation>
    <scope>NUCLEOTIDE SEQUENCE [LARGE SCALE GENOMIC DNA]</scope>
    <source>
        <strain>ATCC 700084 / mc(2)155</strain>
    </source>
</reference>
<reference key="3">
    <citation type="journal article" date="2009" name="Genome Res.">
        <title>Ortho-proteogenomics: multiple proteomes investigation through orthology and a new MS-based protocol.</title>
        <authorList>
            <person name="Gallien S."/>
            <person name="Perrodou E."/>
            <person name="Carapito C."/>
            <person name="Deshayes C."/>
            <person name="Reyrat J.-M."/>
            <person name="Van Dorsselaer A."/>
            <person name="Poch O."/>
            <person name="Schaeffer C."/>
            <person name="Lecompte O."/>
        </authorList>
    </citation>
    <scope>NUCLEOTIDE SEQUENCE [LARGE SCALE GENOMIC DNA]</scope>
    <scope>IDENTIFICATION BY MASS SPECTROMETRY [LARGE SCALE ANALYSIS]</scope>
    <scope>CLEAVAGE OF INITIATOR METHIONINE</scope>
    <source>
        <strain>ATCC 700084 / mc(2)155</strain>
    </source>
</reference>
<sequence>MALTAEQKKEILGQYGLHDTDTGSPEAQVALLTKRIQDLTEHLKVHKHDHHSRRGLLLLVGRRRRLLKYVAQVDVARYRSLIERLGLRR</sequence>